<feature type="chain" id="PRO_0000457202" description="Interferon antagonist OPG039" evidence="2">
    <location>
        <begin position="1"/>
        <end position="284"/>
    </location>
</feature>
<feature type="repeat" description="ANK 1" evidence="3">
    <location>
        <begin position="29"/>
        <end position="58"/>
    </location>
</feature>
<feature type="repeat" description="ANK 2" evidence="3">
    <location>
        <begin position="60"/>
        <end position="89"/>
    </location>
</feature>
<feature type="repeat" description="ANK 3" evidence="3">
    <location>
        <begin position="93"/>
        <end position="122"/>
    </location>
</feature>
<feature type="repeat" description="ANK 4" evidence="3">
    <location>
        <begin position="127"/>
        <end position="157"/>
    </location>
</feature>
<feature type="repeat" description="ANK 5" evidence="3">
    <location>
        <begin position="159"/>
        <end position="188"/>
    </location>
</feature>
<feature type="repeat" description="ANK 6" evidence="3">
    <location>
        <begin position="192"/>
        <end position="221"/>
    </location>
</feature>
<keyword id="KW-0040">ANK repeat</keyword>
<keyword id="KW-0244">Early protein</keyword>
<keyword id="KW-1035">Host cytoplasm</keyword>
<keyword id="KW-1048">Host nucleus</keyword>
<keyword id="KW-0945">Host-virus interaction</keyword>
<keyword id="KW-1090">Inhibition of host innate immune response by virus</keyword>
<keyword id="KW-1100">Inhibition of host NF-kappa-B by virus</keyword>
<keyword id="KW-1185">Reference proteome</keyword>
<keyword id="KW-0677">Repeat</keyword>
<keyword id="KW-0899">Viral immunoevasion</keyword>
<organismHost>
    <name type="scientific">Cynomys gunnisoni</name>
    <name type="common">Gunnison's prairie dog</name>
    <name type="synonym">Spermophilus gunnisoni</name>
    <dbReference type="NCBI Taxonomy" id="45479"/>
</organismHost>
<organismHost>
    <name type="scientific">Cynomys leucurus</name>
    <name type="common">White-tailed prairie dog</name>
    <dbReference type="NCBI Taxonomy" id="99825"/>
</organismHost>
<organismHost>
    <name type="scientific">Cynomys ludovicianus</name>
    <name type="common">Black-tailed prairie dog</name>
    <dbReference type="NCBI Taxonomy" id="45480"/>
</organismHost>
<organismHost>
    <name type="scientific">Cynomys mexicanus</name>
    <name type="common">Mexican prairie dog</name>
    <dbReference type="NCBI Taxonomy" id="99826"/>
</organismHost>
<organismHost>
    <name type="scientific">Cynomys parvidens</name>
    <name type="common">Utah prairie dog</name>
    <dbReference type="NCBI Taxonomy" id="99827"/>
</organismHost>
<organismHost>
    <name type="scientific">Gliridae</name>
    <name type="common">dormice</name>
    <dbReference type="NCBI Taxonomy" id="30650"/>
</organismHost>
<organismHost>
    <name type="scientific">Heliosciurus ruwenzorii</name>
    <name type="common">Ruwenzori sun squirrel</name>
    <dbReference type="NCBI Taxonomy" id="226685"/>
</organismHost>
<organismHost>
    <name type="scientific">Homo sapiens</name>
    <name type="common">Human</name>
    <dbReference type="NCBI Taxonomy" id="9606"/>
</organismHost>
<organismHost>
    <name type="scientific">Mus musculus</name>
    <name type="common">Mouse</name>
    <dbReference type="NCBI Taxonomy" id="10090"/>
</organismHost>
<protein>
    <recommendedName>
        <fullName>Interferon antagonist OPG039</fullName>
    </recommendedName>
</protein>
<organism evidence="5 6">
    <name type="scientific">Monkeypox virus</name>
    <dbReference type="NCBI Taxonomy" id="10244"/>
    <lineage>
        <taxon>Viruses</taxon>
        <taxon>Varidnaviria</taxon>
        <taxon>Bamfordvirae</taxon>
        <taxon>Nucleocytoviricota</taxon>
        <taxon>Pokkesviricetes</taxon>
        <taxon>Chitovirales</taxon>
        <taxon>Poxviridae</taxon>
        <taxon>Chordopoxvirinae</taxon>
        <taxon>Orthopoxvirus</taxon>
    </lineage>
</organism>
<evidence type="ECO:0000250" key="1">
    <source>
        <dbReference type="UniProtKB" id="P04297"/>
    </source>
</evidence>
<evidence type="ECO:0000250" key="2">
    <source>
        <dbReference type="UniProtKB" id="Q5IXZ7"/>
    </source>
</evidence>
<evidence type="ECO:0000255" key="3"/>
<evidence type="ECO:0000305" key="4"/>
<evidence type="ECO:0000312" key="5">
    <source>
        <dbReference type="EMBL" id="QNP12895.1"/>
    </source>
</evidence>
<evidence type="ECO:0000312" key="6">
    <source>
        <dbReference type="Proteomes" id="UP000516359"/>
    </source>
</evidence>
<accession>A0A7H0DN12</accession>
<dbReference type="EMBL" id="MT903340">
    <property type="protein sequence ID" value="QNP12895.1"/>
    <property type="molecule type" value="Genomic_DNA"/>
</dbReference>
<dbReference type="RefSeq" id="YP_010377022.1">
    <property type="nucleotide sequence ID" value="NC_063383.1"/>
</dbReference>
<dbReference type="SMR" id="A0A7H0DN12"/>
<dbReference type="GeneID" id="72551436"/>
<dbReference type="Proteomes" id="UP000516359">
    <property type="component" value="Genome"/>
</dbReference>
<dbReference type="GO" id="GO:0030430">
    <property type="term" value="C:host cell cytoplasm"/>
    <property type="evidence" value="ECO:0007669"/>
    <property type="project" value="UniProtKB-SubCell"/>
</dbReference>
<dbReference type="GO" id="GO:0042025">
    <property type="term" value="C:host cell nucleus"/>
    <property type="evidence" value="ECO:0007669"/>
    <property type="project" value="UniProtKB-SubCell"/>
</dbReference>
<dbReference type="GO" id="GO:0052170">
    <property type="term" value="P:symbiont-mediated suppression of host innate immune response"/>
    <property type="evidence" value="ECO:0007669"/>
    <property type="project" value="UniProtKB-KW"/>
</dbReference>
<dbReference type="GO" id="GO:0085034">
    <property type="term" value="P:symbiont-mediated suppression of host NF-kappaB cascade"/>
    <property type="evidence" value="ECO:0007669"/>
    <property type="project" value="UniProtKB-KW"/>
</dbReference>
<dbReference type="FunFam" id="1.25.40.20:FF:000512">
    <property type="entry name" value="Interferon antagonist K1L"/>
    <property type="match status" value="1"/>
</dbReference>
<dbReference type="Gene3D" id="1.25.40.20">
    <property type="entry name" value="Ankyrin repeat-containing domain"/>
    <property type="match status" value="1"/>
</dbReference>
<dbReference type="InterPro" id="IPR002110">
    <property type="entry name" value="Ankyrin_rpt"/>
</dbReference>
<dbReference type="InterPro" id="IPR036770">
    <property type="entry name" value="Ankyrin_rpt-contain_sf"/>
</dbReference>
<dbReference type="PANTHER" id="PTHR24198">
    <property type="entry name" value="ANKYRIN REPEAT AND PROTEIN KINASE DOMAIN-CONTAINING PROTEIN"/>
    <property type="match status" value="1"/>
</dbReference>
<dbReference type="PANTHER" id="PTHR24198:SF165">
    <property type="entry name" value="ANKYRIN REPEAT-CONTAINING PROTEIN-RELATED"/>
    <property type="match status" value="1"/>
</dbReference>
<dbReference type="Pfam" id="PF12796">
    <property type="entry name" value="Ank_2"/>
    <property type="match status" value="1"/>
</dbReference>
<dbReference type="SMART" id="SM00248">
    <property type="entry name" value="ANK"/>
    <property type="match status" value="6"/>
</dbReference>
<dbReference type="SUPFAM" id="SSF48403">
    <property type="entry name" value="Ankyrin repeat"/>
    <property type="match status" value="1"/>
</dbReference>
<dbReference type="PROSITE" id="PS50297">
    <property type="entry name" value="ANK_REP_REGION"/>
    <property type="match status" value="1"/>
</dbReference>
<dbReference type="PROSITE" id="PS50088">
    <property type="entry name" value="ANK_REPEAT"/>
    <property type="match status" value="2"/>
</dbReference>
<reference key="1">
    <citation type="journal article" date="2022" name="J. Infect. Dis.">
        <title>Exportation of Monkeypox virus from the African continent.</title>
        <authorList>
            <person name="Mauldin M.R."/>
            <person name="McCollum A.M."/>
            <person name="Nakazawa Y.J."/>
            <person name="Mandra A."/>
            <person name="Whitehouse E.R."/>
            <person name="Davidson W."/>
            <person name="Zhao H."/>
            <person name="Gao J."/>
            <person name="Li Y."/>
            <person name="Doty J."/>
            <person name="Yinka-Ogunleye A."/>
            <person name="Akinpelu A."/>
            <person name="Aruna O."/>
            <person name="Naidoo D."/>
            <person name="Lewandowski K."/>
            <person name="Afrough B."/>
            <person name="Graham V."/>
            <person name="Aarons E."/>
            <person name="Hewson R."/>
            <person name="Vipond R."/>
            <person name="Dunning J."/>
            <person name="Chand M."/>
            <person name="Brown C."/>
            <person name="Cohen-Gihon I."/>
            <person name="Erez N."/>
            <person name="Shifman O."/>
            <person name="Israeli O."/>
            <person name="Sharon M."/>
            <person name="Schwartz E."/>
            <person name="Beth-Din A."/>
            <person name="Zvi A."/>
            <person name="Mak T.M."/>
            <person name="Ng Y.K."/>
            <person name="Cui L."/>
            <person name="Lin R.T.P."/>
            <person name="Olson V.A."/>
            <person name="Brooks T."/>
            <person name="Paran N."/>
            <person name="Ihekweazu C."/>
            <person name="Reynolds M.G."/>
        </authorList>
    </citation>
    <scope>NUCLEOTIDE SEQUENCE [LARGE SCALE GENOMIC DNA]</scope>
    <source>
        <strain>MPXV-M5312_HM12_Rivers</strain>
    </source>
</reference>
<name>PG039_MONPV</name>
<proteinExistence type="inferred from homology"/>
<comment type="function">
    <text evidence="1">Inhibits antiviral activity induced by type I interferons. Does not block signal transduction of IFN, but is important to counter the host antiviral state induced by a pre-treatment with IFN. Plays a role in the inhibition of host NF-kappa-B activation by preventing the acetylation of the RELA/p65 subunit of NF-kappaB.</text>
</comment>
<comment type="subcellular location">
    <subcellularLocation>
        <location evidence="1">Host cytoplasm</location>
    </subcellularLocation>
    <subcellularLocation>
        <location evidence="1">Host nucleus</location>
    </subcellularLocation>
</comment>
<comment type="induction">
    <text evidence="1">Expressed in the early phase of the viral replicative cycle.</text>
</comment>
<comment type="similarity">
    <text evidence="4">Belongs to the orthopoxvirus OPG039 family.</text>
</comment>
<gene>
    <name type="primary">OPG039</name>
    <name type="synonym">C1L</name>
    <name type="ORF">MPXVgp028</name>
</gene>
<sequence length="284" mass="32582">MDLSRINTWKSKQLKSFLSSKDAFKADINGHSVLYYAIADNNVRLVCTLLNAGALKNLLDNEFPLHQAATLEDTKIVKILLFSGMDDSQFDDKGNTALYYAVDSGNMQTVKLFVKKNWRLMFYGKTGWKTSFYHAVMLNDVSIVSYFLSEIPSPFDLAILLSCIHTTIKNGHVDMMILLLDYMTSTNTNSLLFIPDIKLAIDNKDIEMLQALFKYDINIYSVNLENVLLDDAEIAKMIIEKHVEYKSDSYTKDLDDVKNNKLDEIISKNEELRLMYVNCVRKNY</sequence>